<comment type="function">
    <text evidence="2 6">Regulatory subunit of the voltage-gated potassium (Kv) channels composed of pore-forming and potassium-conducting alpha subunits and of regulatory beta subunits (PubMed:8549760). The beta-3/KCNAB3 subunit may mediate closure of potassium channels (By similarity). Inactivates Kv1.4/KCNA4 alpha subunit-containing Kv channel current but not Kv1.1/KCNA1 or Kv1.5/KCNA5 channels (PubMed:8549760). May display nicotinamide adenine dinucleotide phosphate (NADPH)-dependent aldoketoreductase activity (By similarity). The binding of oxidized and reduced NADP(H) cofactors may be required for the regulation of potassium channel activity (By similarity).</text>
</comment>
<comment type="subunit">
    <text evidence="3 6">Forms heteromultimeric complex with alpha subunits (PubMed:8549760). Interacts with KCNA5 and KCNB2 (By similarity).</text>
</comment>
<comment type="subcellular location">
    <subcellularLocation>
        <location evidence="4">Cytoplasm</location>
    </subcellularLocation>
</comment>
<comment type="tissue specificity">
    <text evidence="6">Predominantly expressed in brain. Strongest expression in olfactory bulb and thalamic nuclei. Not detected in heart, spleen, lung, liver, skeletal muscle, kidney and testis.</text>
</comment>
<comment type="similarity">
    <text evidence="8">Belongs to the shaker potassium channel beta subunit family.</text>
</comment>
<reference key="1">
    <citation type="journal article" date="1995" name="FEBS Lett.">
        <title>Molecular and functional characterization of a rat brain Kv beta 3 potassium channel subunit.</title>
        <authorList>
            <person name="Heinemann S.H."/>
            <person name="Rettig J."/>
            <person name="Wunder F."/>
            <person name="Pongs O."/>
        </authorList>
    </citation>
    <scope>NUCLEOTIDE SEQUENCE [MRNA]</scope>
    <scope>FUNCTION</scope>
    <scope>TISSUE SPECIFICITY</scope>
    <source>
        <tissue>Brain cortex</tissue>
    </source>
</reference>
<reference key="2">
    <citation type="submission" date="2005-01" db="EMBL/GenBank/DDBJ databases">
        <title>Positional cloning of rat hd.</title>
        <authorList>
            <person name="Liska F."/>
            <person name="Blachut S."/>
            <person name="Gosele C."/>
            <person name="Kren V."/>
            <person name="Krenova D."/>
            <person name="Hubner N."/>
        </authorList>
    </citation>
    <scope>NUCLEOTIDE SEQUENCE [GENOMIC DNA]</scope>
    <source>
        <strain>Brown Norway/Cub</strain>
        <strain>SHR/OlaIpcv</strain>
        <strain>Wistar Hd</strain>
        <tissue>Testis</tissue>
    </source>
</reference>
<accession>Q63494</accession>
<accession>Q2KML7</accession>
<name>KCAB3_RAT</name>
<sequence>MQVSIACTEQNLRSRSSEDRLCGPRPGPGGGNGGPVGGGHGNPPGGGGLGSKSRTAVVPRPPAPAGALRESTGRGTGMKYRNLGKSGLRVSCLGLGTWVTFGSQISDETAEDLLTVAYEHGVNLFDTAEVYAAGKAERTLGNILKSKGWRRSSYVITTKIFWGGQAETERGLSRKHIIEGLQGSLDRLQLEYVDIVFANRSDPSSPMEEIVRAMTYVINQGLALYWGTSRWSAAEIMEAYSMARQFNLIPPVCEQAENHFFQREKVEMQLPELYHKIGVGSVTWSPLACSLITSKYDGQVPDACKATVKGYQWLKEKVQSEDGKKQQARVTDLLPIAHQLGCTVAQLAIAWCLRSEGVSSVLLGVSSAEQLMEHLGSLQVLGQLTPQTVMEIDALLGNKSHSKK</sequence>
<protein>
    <recommendedName>
        <fullName>Voltage-gated potassium channel subunit beta-3</fullName>
        <ecNumber evidence="1">1.1.1.-</ecNumber>
    </recommendedName>
    <alternativeName>
        <fullName>K(+) channel subunit beta-3</fullName>
    </alternativeName>
    <alternativeName>
        <fullName evidence="7">Kv-beta-3</fullName>
    </alternativeName>
    <alternativeName>
        <fullName>RCK beta3</fullName>
    </alternativeName>
</protein>
<gene>
    <name evidence="9" type="primary">Kcnab3</name>
    <name type="synonym">Ckbeta3</name>
</gene>
<keyword id="KW-0963">Cytoplasm</keyword>
<keyword id="KW-0407">Ion channel</keyword>
<keyword id="KW-0406">Ion transport</keyword>
<keyword id="KW-0521">NADP</keyword>
<keyword id="KW-0560">Oxidoreductase</keyword>
<keyword id="KW-0630">Potassium</keyword>
<keyword id="KW-0633">Potassium transport</keyword>
<keyword id="KW-1185">Reference proteome</keyword>
<keyword id="KW-0813">Transport</keyword>
<keyword id="KW-0851">Voltage-gated channel</keyword>
<proteinExistence type="evidence at transcript level"/>
<dbReference type="EC" id="1.1.1.-" evidence="1"/>
<dbReference type="EMBL" id="X76723">
    <property type="protein sequence ID" value="CAA54141.1"/>
    <property type="molecule type" value="mRNA"/>
</dbReference>
<dbReference type="EMBL" id="AY903239">
    <property type="protein sequence ID" value="AAX85369.1"/>
    <property type="molecule type" value="Genomic_DNA"/>
</dbReference>
<dbReference type="EMBL" id="AY903240">
    <property type="protein sequence ID" value="AAX85370.1"/>
    <property type="molecule type" value="Genomic_DNA"/>
</dbReference>
<dbReference type="EMBL" id="AY903241">
    <property type="protein sequence ID" value="AAX85371.1"/>
    <property type="molecule type" value="Genomic_DNA"/>
</dbReference>
<dbReference type="PIR" id="S68409">
    <property type="entry name" value="S68409"/>
</dbReference>
<dbReference type="RefSeq" id="NP_113840.1">
    <property type="nucleotide sequence ID" value="NM_031652.2"/>
</dbReference>
<dbReference type="SMR" id="Q63494"/>
<dbReference type="CORUM" id="Q63494"/>
<dbReference type="FunCoup" id="Q63494">
    <property type="interactions" value="90"/>
</dbReference>
<dbReference type="STRING" id="10116.ENSRNOP00000011523"/>
<dbReference type="iPTMnet" id="Q63494"/>
<dbReference type="PhosphoSitePlus" id="Q63494"/>
<dbReference type="PaxDb" id="10116-ENSRNOP00000011523"/>
<dbReference type="ABCD" id="Q63494">
    <property type="antibodies" value="1 sequenced antibody"/>
</dbReference>
<dbReference type="Ensembl" id="ENSRNOT00000011523.6">
    <property type="protein sequence ID" value="ENSRNOP00000011523.3"/>
    <property type="gene ID" value="ENSRNOG00000008480.7"/>
</dbReference>
<dbReference type="GeneID" id="58981"/>
<dbReference type="KEGG" id="rno:58981"/>
<dbReference type="UCSC" id="RGD:61830">
    <property type="organism name" value="rat"/>
</dbReference>
<dbReference type="AGR" id="RGD:61830"/>
<dbReference type="CTD" id="9196"/>
<dbReference type="RGD" id="61830">
    <property type="gene designation" value="Kcnab3"/>
</dbReference>
<dbReference type="eggNOG" id="KOG1575">
    <property type="taxonomic scope" value="Eukaryota"/>
</dbReference>
<dbReference type="GeneTree" id="ENSGT00940000159306"/>
<dbReference type="HOGENOM" id="CLU_023205_2_0_1"/>
<dbReference type="InParanoid" id="Q63494"/>
<dbReference type="OMA" id="EQPAYNM"/>
<dbReference type="OrthoDB" id="1720422at2759"/>
<dbReference type="PhylomeDB" id="Q63494"/>
<dbReference type="TreeFam" id="TF324563"/>
<dbReference type="Reactome" id="R-RNO-1296072">
    <property type="pathway name" value="Voltage gated Potassium channels"/>
</dbReference>
<dbReference type="PRO" id="PR:Q63494"/>
<dbReference type="Proteomes" id="UP000002494">
    <property type="component" value="Chromosome 10"/>
</dbReference>
<dbReference type="Bgee" id="ENSRNOG00000008480">
    <property type="expression patterns" value="Expressed in cerebellum and 6 other cell types or tissues"/>
</dbReference>
<dbReference type="GO" id="GO:0005737">
    <property type="term" value="C:cytoplasm"/>
    <property type="evidence" value="ECO:0007669"/>
    <property type="project" value="UniProtKB-SubCell"/>
</dbReference>
<dbReference type="GO" id="GO:0008076">
    <property type="term" value="C:voltage-gated potassium channel complex"/>
    <property type="evidence" value="ECO:0000318"/>
    <property type="project" value="GO_Central"/>
</dbReference>
<dbReference type="GO" id="GO:0004033">
    <property type="term" value="F:aldo-keto reductase (NADPH) activity"/>
    <property type="evidence" value="ECO:0000318"/>
    <property type="project" value="GO_Central"/>
</dbReference>
<dbReference type="GO" id="GO:0015459">
    <property type="term" value="F:potassium channel regulator activity"/>
    <property type="evidence" value="ECO:0000318"/>
    <property type="project" value="GO_Central"/>
</dbReference>
<dbReference type="GO" id="GO:0044325">
    <property type="term" value="F:transmembrane transporter binding"/>
    <property type="evidence" value="ECO:0000318"/>
    <property type="project" value="GO_Central"/>
</dbReference>
<dbReference type="GO" id="GO:0005249">
    <property type="term" value="F:voltage-gated potassium channel activity"/>
    <property type="evidence" value="ECO:0007669"/>
    <property type="project" value="InterPro"/>
</dbReference>
<dbReference type="GO" id="GO:1901379">
    <property type="term" value="P:regulation of potassium ion transmembrane transport"/>
    <property type="evidence" value="ECO:0000318"/>
    <property type="project" value="GO_Central"/>
</dbReference>
<dbReference type="CDD" id="cd19160">
    <property type="entry name" value="AKR_KCAB3B_AKR6A9-like"/>
    <property type="match status" value="1"/>
</dbReference>
<dbReference type="FunFam" id="3.20.20.100:FF:000001">
    <property type="entry name" value="voltage-gated potassium channel subunit beta-2 isoform X2"/>
    <property type="match status" value="1"/>
</dbReference>
<dbReference type="Gene3D" id="3.20.20.100">
    <property type="entry name" value="NADP-dependent oxidoreductase domain"/>
    <property type="match status" value="1"/>
</dbReference>
<dbReference type="InterPro" id="IPR005983">
    <property type="entry name" value="K_chnl_volt-dep_bsu_KCNAB"/>
</dbReference>
<dbReference type="InterPro" id="IPR005399">
    <property type="entry name" value="K_chnl_volt-dep_bsu_KCNAB-rel"/>
</dbReference>
<dbReference type="InterPro" id="IPR005402">
    <property type="entry name" value="K_chnl_volt-dep_bsu_KCNAB3"/>
</dbReference>
<dbReference type="InterPro" id="IPR023210">
    <property type="entry name" value="NADP_OxRdtase_dom"/>
</dbReference>
<dbReference type="InterPro" id="IPR036812">
    <property type="entry name" value="NADP_OxRdtase_dom_sf"/>
</dbReference>
<dbReference type="NCBIfam" id="TIGR01293">
    <property type="entry name" value="Kv_beta"/>
    <property type="match status" value="1"/>
</dbReference>
<dbReference type="PANTHER" id="PTHR43150">
    <property type="entry name" value="HYPERKINETIC, ISOFORM M"/>
    <property type="match status" value="1"/>
</dbReference>
<dbReference type="PANTHER" id="PTHR43150:SF3">
    <property type="entry name" value="VOLTAGE-GATED POTASSIUM CHANNEL SUBUNIT BETA-3"/>
    <property type="match status" value="1"/>
</dbReference>
<dbReference type="Pfam" id="PF00248">
    <property type="entry name" value="Aldo_ket_red"/>
    <property type="match status" value="1"/>
</dbReference>
<dbReference type="PRINTS" id="PR01580">
    <property type="entry name" value="KCNAB3CHANEL"/>
</dbReference>
<dbReference type="PRINTS" id="PR01577">
    <property type="entry name" value="KCNABCHANNEL"/>
</dbReference>
<dbReference type="SUPFAM" id="SSF51430">
    <property type="entry name" value="NAD(P)-linked oxidoreductase"/>
    <property type="match status" value="1"/>
</dbReference>
<organism>
    <name type="scientific">Rattus norvegicus</name>
    <name type="common">Rat</name>
    <dbReference type="NCBI Taxonomy" id="10116"/>
    <lineage>
        <taxon>Eukaryota</taxon>
        <taxon>Metazoa</taxon>
        <taxon>Chordata</taxon>
        <taxon>Craniata</taxon>
        <taxon>Vertebrata</taxon>
        <taxon>Euteleostomi</taxon>
        <taxon>Mammalia</taxon>
        <taxon>Eutheria</taxon>
        <taxon>Euarchontoglires</taxon>
        <taxon>Glires</taxon>
        <taxon>Rodentia</taxon>
        <taxon>Myomorpha</taxon>
        <taxon>Muroidea</taxon>
        <taxon>Muridae</taxon>
        <taxon>Murinae</taxon>
        <taxon>Rattus</taxon>
    </lineage>
</organism>
<evidence type="ECO:0000250" key="1">
    <source>
        <dbReference type="UniProtKB" id="P62483"/>
    </source>
</evidence>
<evidence type="ECO:0000250" key="2">
    <source>
        <dbReference type="UniProtKB" id="P63144"/>
    </source>
</evidence>
<evidence type="ECO:0000250" key="3">
    <source>
        <dbReference type="UniProtKB" id="P97382"/>
    </source>
</evidence>
<evidence type="ECO:0000250" key="4">
    <source>
        <dbReference type="UniProtKB" id="Q14722"/>
    </source>
</evidence>
<evidence type="ECO:0000256" key="5">
    <source>
        <dbReference type="SAM" id="MobiDB-lite"/>
    </source>
</evidence>
<evidence type="ECO:0000269" key="6">
    <source>
    </source>
</evidence>
<evidence type="ECO:0000303" key="7">
    <source>
    </source>
</evidence>
<evidence type="ECO:0000305" key="8"/>
<evidence type="ECO:0000312" key="9">
    <source>
        <dbReference type="RGD" id="61830"/>
    </source>
</evidence>
<feature type="chain" id="PRO_0000148752" description="Voltage-gated potassium channel subunit beta-3">
    <location>
        <begin position="1"/>
        <end position="404"/>
    </location>
</feature>
<feature type="region of interest" description="Disordered" evidence="5">
    <location>
        <begin position="1"/>
        <end position="78"/>
    </location>
</feature>
<feature type="compositionally biased region" description="Polar residues" evidence="5">
    <location>
        <begin position="1"/>
        <end position="14"/>
    </location>
</feature>
<feature type="compositionally biased region" description="Gly residues" evidence="5">
    <location>
        <begin position="28"/>
        <end position="50"/>
    </location>
</feature>
<feature type="active site" description="Proton donor/acceptor" evidence="1">
    <location>
        <position position="131"/>
    </location>
</feature>
<feature type="binding site" evidence="1">
    <location>
        <position position="97"/>
    </location>
    <ligand>
        <name>NADP(+)</name>
        <dbReference type="ChEBI" id="CHEBI:58349"/>
    </ligand>
</feature>
<feature type="binding site" evidence="1">
    <location>
        <position position="98"/>
    </location>
    <ligand>
        <name>NADP(+)</name>
        <dbReference type="ChEBI" id="CHEBI:58349"/>
    </ligand>
</feature>
<feature type="binding site" evidence="1">
    <location>
        <position position="104"/>
    </location>
    <ligand>
        <name>NADP(+)</name>
        <dbReference type="ChEBI" id="CHEBI:58349"/>
    </ligand>
</feature>
<feature type="binding site" evidence="1">
    <location>
        <position position="126"/>
    </location>
    <ligand>
        <name>NADP(+)</name>
        <dbReference type="ChEBI" id="CHEBI:58349"/>
    </ligand>
</feature>
<feature type="binding site" evidence="1">
    <location>
        <position position="199"/>
    </location>
    <ligand>
        <name>NADP(+)</name>
        <dbReference type="ChEBI" id="CHEBI:58349"/>
    </ligand>
</feature>
<feature type="binding site" evidence="1">
    <location>
        <position position="229"/>
    </location>
    <ligand>
        <name>NADP(+)</name>
        <dbReference type="ChEBI" id="CHEBI:58349"/>
    </ligand>
</feature>
<feature type="binding site" evidence="1">
    <location>
        <position position="230"/>
    </location>
    <ligand>
        <name>NADP(+)</name>
        <dbReference type="ChEBI" id="CHEBI:58349"/>
    </ligand>
</feature>
<feature type="binding site" evidence="1">
    <location>
        <position position="255"/>
    </location>
    <ligand>
        <name>NADP(+)</name>
        <dbReference type="ChEBI" id="CHEBI:58349"/>
    </ligand>
</feature>
<feature type="binding site" evidence="1">
    <location>
        <position position="284"/>
    </location>
    <ligand>
        <name>NADP(+)</name>
        <dbReference type="ChEBI" id="CHEBI:58349"/>
    </ligand>
</feature>
<feature type="binding site" evidence="1">
    <location>
        <position position="285"/>
    </location>
    <ligand>
        <name>NADP(+)</name>
        <dbReference type="ChEBI" id="CHEBI:58349"/>
    </ligand>
</feature>
<feature type="binding site" evidence="1">
    <location>
        <position position="286"/>
    </location>
    <ligand>
        <name>NADP(+)</name>
        <dbReference type="ChEBI" id="CHEBI:58349"/>
    </ligand>
</feature>
<feature type="binding site" evidence="1">
    <location>
        <position position="287"/>
    </location>
    <ligand>
        <name>NADP(+)</name>
        <dbReference type="ChEBI" id="CHEBI:58349"/>
    </ligand>
</feature>
<feature type="binding site" evidence="1">
    <location>
        <position position="288"/>
    </location>
    <ligand>
        <name>NADP(+)</name>
        <dbReference type="ChEBI" id="CHEBI:58349"/>
    </ligand>
</feature>
<feature type="binding site" evidence="1">
    <location>
        <position position="289"/>
    </location>
    <ligand>
        <name>NADP(+)</name>
        <dbReference type="ChEBI" id="CHEBI:58349"/>
    </ligand>
</feature>
<feature type="binding site" evidence="1">
    <location>
        <position position="295"/>
    </location>
    <ligand>
        <name>NADP(+)</name>
        <dbReference type="ChEBI" id="CHEBI:58349"/>
    </ligand>
</feature>
<feature type="binding site" evidence="1">
    <location>
        <position position="305"/>
    </location>
    <ligand>
        <name>NADP(+)</name>
        <dbReference type="ChEBI" id="CHEBI:58349"/>
    </ligand>
</feature>
<feature type="binding site" evidence="1">
    <location>
        <position position="364"/>
    </location>
    <ligand>
        <name>NADP(+)</name>
        <dbReference type="ChEBI" id="CHEBI:58349"/>
    </ligand>
</feature>
<feature type="binding site" evidence="1">
    <location>
        <position position="366"/>
    </location>
    <ligand>
        <name>NADP(+)</name>
        <dbReference type="ChEBI" id="CHEBI:58349"/>
    </ligand>
</feature>
<feature type="binding site" evidence="1">
    <location>
        <position position="370"/>
    </location>
    <ligand>
        <name>NADP(+)</name>
        <dbReference type="ChEBI" id="CHEBI:58349"/>
    </ligand>
</feature>
<feature type="binding site" evidence="1">
    <location>
        <position position="373"/>
    </location>
    <ligand>
        <name>NADP(+)</name>
        <dbReference type="ChEBI" id="CHEBI:58349"/>
    </ligand>
</feature>